<reference key="1">
    <citation type="journal article" date="2005" name="Nat. Biotechnol.">
        <title>Complete genome sequence of the plant commensal Pseudomonas fluorescens Pf-5.</title>
        <authorList>
            <person name="Paulsen I.T."/>
            <person name="Press C.M."/>
            <person name="Ravel J."/>
            <person name="Kobayashi D.Y."/>
            <person name="Myers G.S.A."/>
            <person name="Mavrodi D.V."/>
            <person name="DeBoy R.T."/>
            <person name="Seshadri R."/>
            <person name="Ren Q."/>
            <person name="Madupu R."/>
            <person name="Dodson R.J."/>
            <person name="Durkin A.S."/>
            <person name="Brinkac L.M."/>
            <person name="Daugherty S.C."/>
            <person name="Sullivan S.A."/>
            <person name="Rosovitz M.J."/>
            <person name="Gwinn M.L."/>
            <person name="Zhou L."/>
            <person name="Schneider D.J."/>
            <person name="Cartinhour S.W."/>
            <person name="Nelson W.C."/>
            <person name="Weidman J."/>
            <person name="Watkins K."/>
            <person name="Tran K."/>
            <person name="Khouri H."/>
            <person name="Pierson E.A."/>
            <person name="Pierson L.S. III"/>
            <person name="Thomashow L.S."/>
            <person name="Loper J.E."/>
        </authorList>
    </citation>
    <scope>NUCLEOTIDE SEQUENCE [LARGE SCALE GENOMIC DNA]</scope>
    <source>
        <strain>ATCC BAA-477 / NRRL B-23932 / Pf-5</strain>
    </source>
</reference>
<comment type="function">
    <text evidence="1">Catalyzes the interconversion of L-alanine and D-alanine. May also act on other amino acids.</text>
</comment>
<comment type="catalytic activity">
    <reaction evidence="1">
        <text>L-alanine = D-alanine</text>
        <dbReference type="Rhea" id="RHEA:20249"/>
        <dbReference type="ChEBI" id="CHEBI:57416"/>
        <dbReference type="ChEBI" id="CHEBI:57972"/>
        <dbReference type="EC" id="5.1.1.1"/>
    </reaction>
</comment>
<comment type="cofactor">
    <cofactor evidence="1">
        <name>pyridoxal 5'-phosphate</name>
        <dbReference type="ChEBI" id="CHEBI:597326"/>
    </cofactor>
</comment>
<comment type="pathway">
    <text evidence="1">Amino-acid biosynthesis; D-alanine biosynthesis; D-alanine from L-alanine: step 1/1.</text>
</comment>
<comment type="similarity">
    <text evidence="1">Belongs to the alanine racemase family.</text>
</comment>
<sequence>MRPARALIDLQALRHNYQLARETSGVRALAVIKADAYGHGAVRCAQALEGEADGFAVACIEEALELRAAGIRAPVLLLEGFFEASELALIVEHDFWCVVHSLWQLEAIEQAAVAKPLTVWLKLDSGMHRVGLHPKDYQVAYQRLQASGKVEKIVLMSHFARADELDCPRSSEQVAVFEAARQGLGAEISLRNSPAVMGWPSVPSDWVRPGIMLYGSTPFEENNSVAARLQPVMTLESKVICVRELPAGEPVGYGARFITDRPMRIGVVAMGYADGYPRHAPTGTPVLVAGQRSRLLGRVSMDMLCVDLTDVPQAGLGSTVELWGKNILASDVAQAADTIPYQLFCNLRRVPLVYCEG</sequence>
<feature type="chain" id="PRO_1000066028" description="Alanine racemase">
    <location>
        <begin position="1"/>
        <end position="357"/>
    </location>
</feature>
<feature type="active site" description="Proton acceptor; specific for D-alanine" evidence="1">
    <location>
        <position position="33"/>
    </location>
</feature>
<feature type="active site" description="Proton acceptor; specific for L-alanine" evidence="1">
    <location>
        <position position="253"/>
    </location>
</feature>
<feature type="binding site" evidence="1">
    <location>
        <position position="129"/>
    </location>
    <ligand>
        <name>substrate</name>
    </ligand>
</feature>
<feature type="binding site" evidence="1">
    <location>
        <position position="301"/>
    </location>
    <ligand>
        <name>substrate</name>
    </ligand>
</feature>
<feature type="modified residue" description="N6-(pyridoxal phosphate)lysine" evidence="1">
    <location>
        <position position="33"/>
    </location>
</feature>
<dbReference type="EC" id="5.1.1.1" evidence="1"/>
<dbReference type="EMBL" id="CP000076">
    <property type="protein sequence ID" value="AAY95225.1"/>
    <property type="molecule type" value="Genomic_DNA"/>
</dbReference>
<dbReference type="RefSeq" id="WP_011064207.1">
    <property type="nucleotide sequence ID" value="NC_004129.6"/>
</dbReference>
<dbReference type="SMR" id="Q4K3T9"/>
<dbReference type="STRING" id="220664.PFL_6036"/>
<dbReference type="KEGG" id="pfl:PFL_6036"/>
<dbReference type="PATRIC" id="fig|220664.5.peg.6162"/>
<dbReference type="eggNOG" id="COG0787">
    <property type="taxonomic scope" value="Bacteria"/>
</dbReference>
<dbReference type="HOGENOM" id="CLU_028393_1_0_6"/>
<dbReference type="UniPathway" id="UPA00042">
    <property type="reaction ID" value="UER00497"/>
</dbReference>
<dbReference type="Proteomes" id="UP000008540">
    <property type="component" value="Chromosome"/>
</dbReference>
<dbReference type="GO" id="GO:0005829">
    <property type="term" value="C:cytosol"/>
    <property type="evidence" value="ECO:0007669"/>
    <property type="project" value="TreeGrafter"/>
</dbReference>
<dbReference type="GO" id="GO:0008784">
    <property type="term" value="F:alanine racemase activity"/>
    <property type="evidence" value="ECO:0007669"/>
    <property type="project" value="UniProtKB-UniRule"/>
</dbReference>
<dbReference type="GO" id="GO:0030170">
    <property type="term" value="F:pyridoxal phosphate binding"/>
    <property type="evidence" value="ECO:0007669"/>
    <property type="project" value="UniProtKB-UniRule"/>
</dbReference>
<dbReference type="GO" id="GO:0030632">
    <property type="term" value="P:D-alanine biosynthetic process"/>
    <property type="evidence" value="ECO:0007669"/>
    <property type="project" value="UniProtKB-UniRule"/>
</dbReference>
<dbReference type="CDD" id="cd06827">
    <property type="entry name" value="PLPDE_III_AR_proteobact"/>
    <property type="match status" value="1"/>
</dbReference>
<dbReference type="FunFam" id="2.40.37.10:FF:000002">
    <property type="entry name" value="Alanine racemase"/>
    <property type="match status" value="1"/>
</dbReference>
<dbReference type="FunFam" id="3.20.20.10:FF:000002">
    <property type="entry name" value="Alanine racemase"/>
    <property type="match status" value="1"/>
</dbReference>
<dbReference type="Gene3D" id="3.20.20.10">
    <property type="entry name" value="Alanine racemase"/>
    <property type="match status" value="1"/>
</dbReference>
<dbReference type="Gene3D" id="2.40.37.10">
    <property type="entry name" value="Lyase, Ornithine Decarboxylase, Chain A, domain 1"/>
    <property type="match status" value="1"/>
</dbReference>
<dbReference type="HAMAP" id="MF_01201">
    <property type="entry name" value="Ala_racemase"/>
    <property type="match status" value="1"/>
</dbReference>
<dbReference type="InterPro" id="IPR000821">
    <property type="entry name" value="Ala_racemase"/>
</dbReference>
<dbReference type="InterPro" id="IPR009006">
    <property type="entry name" value="Ala_racemase/Decarboxylase_C"/>
</dbReference>
<dbReference type="InterPro" id="IPR011079">
    <property type="entry name" value="Ala_racemase_C"/>
</dbReference>
<dbReference type="InterPro" id="IPR001608">
    <property type="entry name" value="Ala_racemase_N"/>
</dbReference>
<dbReference type="InterPro" id="IPR020622">
    <property type="entry name" value="Ala_racemase_pyridoxalP-BS"/>
</dbReference>
<dbReference type="InterPro" id="IPR029066">
    <property type="entry name" value="PLP-binding_barrel"/>
</dbReference>
<dbReference type="NCBIfam" id="TIGR00492">
    <property type="entry name" value="alr"/>
    <property type="match status" value="1"/>
</dbReference>
<dbReference type="PANTHER" id="PTHR30511">
    <property type="entry name" value="ALANINE RACEMASE"/>
    <property type="match status" value="1"/>
</dbReference>
<dbReference type="PANTHER" id="PTHR30511:SF0">
    <property type="entry name" value="ALANINE RACEMASE, CATABOLIC-RELATED"/>
    <property type="match status" value="1"/>
</dbReference>
<dbReference type="Pfam" id="PF00842">
    <property type="entry name" value="Ala_racemase_C"/>
    <property type="match status" value="1"/>
</dbReference>
<dbReference type="Pfam" id="PF01168">
    <property type="entry name" value="Ala_racemase_N"/>
    <property type="match status" value="1"/>
</dbReference>
<dbReference type="PRINTS" id="PR00992">
    <property type="entry name" value="ALARACEMASE"/>
</dbReference>
<dbReference type="SMART" id="SM01005">
    <property type="entry name" value="Ala_racemase_C"/>
    <property type="match status" value="1"/>
</dbReference>
<dbReference type="SUPFAM" id="SSF50621">
    <property type="entry name" value="Alanine racemase C-terminal domain-like"/>
    <property type="match status" value="1"/>
</dbReference>
<dbReference type="SUPFAM" id="SSF51419">
    <property type="entry name" value="PLP-binding barrel"/>
    <property type="match status" value="1"/>
</dbReference>
<dbReference type="PROSITE" id="PS00395">
    <property type="entry name" value="ALANINE_RACEMASE"/>
    <property type="match status" value="1"/>
</dbReference>
<accession>Q4K3T9</accession>
<name>ALR_PSEF5</name>
<protein>
    <recommendedName>
        <fullName evidence="1">Alanine racemase</fullName>
        <ecNumber evidence="1">5.1.1.1</ecNumber>
    </recommendedName>
</protein>
<evidence type="ECO:0000255" key="1">
    <source>
        <dbReference type="HAMAP-Rule" id="MF_01201"/>
    </source>
</evidence>
<keyword id="KW-0413">Isomerase</keyword>
<keyword id="KW-0663">Pyridoxal phosphate</keyword>
<organism>
    <name type="scientific">Pseudomonas fluorescens (strain ATCC BAA-477 / NRRL B-23932 / Pf-5)</name>
    <dbReference type="NCBI Taxonomy" id="220664"/>
    <lineage>
        <taxon>Bacteria</taxon>
        <taxon>Pseudomonadati</taxon>
        <taxon>Pseudomonadota</taxon>
        <taxon>Gammaproteobacteria</taxon>
        <taxon>Pseudomonadales</taxon>
        <taxon>Pseudomonadaceae</taxon>
        <taxon>Pseudomonas</taxon>
    </lineage>
</organism>
<gene>
    <name type="primary">alr</name>
    <name type="ordered locus">PFL_6036</name>
</gene>
<proteinExistence type="inferred from homology"/>